<name>HPRR_MYCGE</name>
<sequence length="141" mass="15603">MDKKYDITAVLNDDSSINAVSDNFQITLDARPKEKSKGINPLSAFLAGLAACELATANAMAAAKMITLNKALINIKGYRLTNPSDGYFGLRELNIHWEIHSPNEEEEIKEFIDFVSKRCPAHNTLHGTSNFKINISVTLVH</sequence>
<proteinExistence type="evidence at protein level"/>
<accession>P47666</accession>
<comment type="function">
    <text evidence="2">Reduces organic and inorganic peroxide substrates. Protects the cell against oxidative stress.</text>
</comment>
<comment type="subunit">
    <text evidence="1">Homodimer.</text>
</comment>
<comment type="subcellular location">
    <subcellularLocation>
        <location evidence="2">Cytoplasm</location>
    </subcellularLocation>
    <text>A small fraction is associated with the cell membrane.</text>
</comment>
<comment type="induction">
    <text evidence="2">Down-regulated by osmotic shock and ethanol. Not induced by oxidative stress.</text>
</comment>
<comment type="disruption phenotype">
    <text evidence="2">Mutant is highly sensitive to killing by tert-butyl hydroperoxide (t-BHP) and H(2)O(2).</text>
</comment>
<comment type="similarity">
    <text evidence="3">Belongs to the OsmC/Ohr family.</text>
</comment>
<keyword id="KW-0963">Cytoplasm</keyword>
<keyword id="KW-0560">Oxidoreductase</keyword>
<keyword id="KW-0575">Peroxidase</keyword>
<keyword id="KW-1185">Reference proteome</keyword>
<evidence type="ECO:0000250" key="1"/>
<evidence type="ECO:0000269" key="2">
    <source>
    </source>
</evidence>
<evidence type="ECO:0000305" key="3"/>
<protein>
    <recommendedName>
        <fullName>Hydroperoxide reductase</fullName>
        <ecNumber>1.11.1.-</ecNumber>
    </recommendedName>
</protein>
<feature type="chain" id="PRO_0000210606" description="Hydroperoxide reductase">
    <location>
        <begin position="1"/>
        <end position="141"/>
    </location>
</feature>
<organism>
    <name type="scientific">Mycoplasma genitalium (strain ATCC 33530 / DSM 19775 / NCTC 10195 / G37)</name>
    <name type="common">Mycoplasmoides genitalium</name>
    <dbReference type="NCBI Taxonomy" id="243273"/>
    <lineage>
        <taxon>Bacteria</taxon>
        <taxon>Bacillati</taxon>
        <taxon>Mycoplasmatota</taxon>
        <taxon>Mycoplasmoidales</taxon>
        <taxon>Mycoplasmoidaceae</taxon>
        <taxon>Mycoplasmoides</taxon>
    </lineage>
</organism>
<dbReference type="EC" id="1.11.1.-"/>
<dbReference type="EMBL" id="L43967">
    <property type="protein sequence ID" value="AAC72448.1"/>
    <property type="molecule type" value="Genomic_DNA"/>
</dbReference>
<dbReference type="PIR" id="B64247">
    <property type="entry name" value="B64247"/>
</dbReference>
<dbReference type="RefSeq" id="WP_009885605.1">
    <property type="nucleotide sequence ID" value="NC_000908.2"/>
</dbReference>
<dbReference type="SMR" id="P47666"/>
<dbReference type="STRING" id="243273.MG_427"/>
<dbReference type="GeneID" id="88282608"/>
<dbReference type="KEGG" id="mge:MG_427"/>
<dbReference type="eggNOG" id="COG1765">
    <property type="taxonomic scope" value="Bacteria"/>
</dbReference>
<dbReference type="HOGENOM" id="CLU_100275_2_1_14"/>
<dbReference type="InParanoid" id="P47666"/>
<dbReference type="OrthoDB" id="384648at2"/>
<dbReference type="BioCyc" id="MGEN243273:G1GJ2-521-MONOMER"/>
<dbReference type="Proteomes" id="UP000000807">
    <property type="component" value="Chromosome"/>
</dbReference>
<dbReference type="GO" id="GO:0005737">
    <property type="term" value="C:cytoplasm"/>
    <property type="evidence" value="ECO:0007669"/>
    <property type="project" value="UniProtKB-SubCell"/>
</dbReference>
<dbReference type="GO" id="GO:0004601">
    <property type="term" value="F:peroxidase activity"/>
    <property type="evidence" value="ECO:0007669"/>
    <property type="project" value="UniProtKB-KW"/>
</dbReference>
<dbReference type="Gene3D" id="2.20.25.10">
    <property type="match status" value="1"/>
</dbReference>
<dbReference type="Gene3D" id="3.30.300.20">
    <property type="match status" value="1"/>
</dbReference>
<dbReference type="InterPro" id="IPR015946">
    <property type="entry name" value="KH_dom-like_a/b"/>
</dbReference>
<dbReference type="InterPro" id="IPR003718">
    <property type="entry name" value="OsmC/Ohr_fam"/>
</dbReference>
<dbReference type="InterPro" id="IPR052924">
    <property type="entry name" value="OsmC/Ohr_hydroprdx_reductase"/>
</dbReference>
<dbReference type="InterPro" id="IPR036102">
    <property type="entry name" value="OsmC/Ohrsf"/>
</dbReference>
<dbReference type="PANTHER" id="PTHR35368">
    <property type="entry name" value="HYDROPEROXIDE REDUCTASE"/>
    <property type="match status" value="1"/>
</dbReference>
<dbReference type="PANTHER" id="PTHR35368:SF1">
    <property type="entry name" value="HYDROPEROXIDE REDUCTASE"/>
    <property type="match status" value="1"/>
</dbReference>
<dbReference type="Pfam" id="PF02566">
    <property type="entry name" value="OsmC"/>
    <property type="match status" value="1"/>
</dbReference>
<dbReference type="SUPFAM" id="SSF82784">
    <property type="entry name" value="OsmC-like"/>
    <property type="match status" value="1"/>
</dbReference>
<gene>
    <name type="ordered locus">MG427</name>
</gene>
<reference key="1">
    <citation type="journal article" date="1995" name="Science">
        <title>The minimal gene complement of Mycoplasma genitalium.</title>
        <authorList>
            <person name="Fraser C.M."/>
            <person name="Gocayne J.D."/>
            <person name="White O."/>
            <person name="Adams M.D."/>
            <person name="Clayton R.A."/>
            <person name="Fleischmann R.D."/>
            <person name="Bult C.J."/>
            <person name="Kerlavage A.R."/>
            <person name="Sutton G.G."/>
            <person name="Kelley J.M."/>
            <person name="Fritchman J.L."/>
            <person name="Weidman J.F."/>
            <person name="Small K.V."/>
            <person name="Sandusky M."/>
            <person name="Fuhrmann J.L."/>
            <person name="Nguyen D.T."/>
            <person name="Utterback T.R."/>
            <person name="Saudek D.M."/>
            <person name="Phillips C.A."/>
            <person name="Merrick J.M."/>
            <person name="Tomb J.-F."/>
            <person name="Dougherty B.A."/>
            <person name="Bott K.F."/>
            <person name="Hu P.-C."/>
            <person name="Lucier T.S."/>
            <person name="Peterson S.N."/>
            <person name="Smith H.O."/>
            <person name="Hutchison C.A. III"/>
            <person name="Venter J.C."/>
        </authorList>
    </citation>
    <scope>NUCLEOTIDE SEQUENCE [LARGE SCALE GENOMIC DNA]</scope>
    <source>
        <strain>ATCC 33530 / DSM 19775 / NCTC 10195 / G37</strain>
    </source>
</reference>
<reference key="2">
    <citation type="journal article" date="2014" name="J. Bacteriol.">
        <title>Functional characterization of osmotically inducible protein C (MG_427) from Mycoplasma genitalium.</title>
        <authorList>
            <person name="Zhang W."/>
            <person name="Baseman J.B."/>
        </authorList>
    </citation>
    <scope>FUNCTION AS A PEROXIDASE</scope>
    <scope>SUBCELLULAR LOCATION</scope>
    <scope>INDUCTION</scope>
    <scope>DISRUPTION PHENOTYPE</scope>
    <source>
        <strain>ATCC 33530 / DSM 19775 / NCTC 10195 / G37</strain>
    </source>
</reference>